<keyword id="KW-0328">Glycosyltransferase</keyword>
<keyword id="KW-0808">Transferase</keyword>
<name>TYPH_CHESB</name>
<accession>Q11BH8</accession>
<sequence>MTALVSPAGPEQPSLRVRRLLLHTQHQPVVVMHTDCHVCRSEGLAARSQVLLTNGARQVHATLFQVDGDAVLSHDEVGLSETAWDLLGVAEGDEVRVSHPPALESLASVRRRIYGHRLDAQALSEIVRDVAAGRYTDVHLAAFLTASAALPLDENETADLTGAMIAVGDRMEWDAPTVVDKHCVGGLPGNRTTPIVVAIVAANGLVMPKTSSRAITSPAGTADTMETLAPVDLDLATLRRVVEAEGGCIAWGGAVHLSPADDIFVRVERELDVDTEGQLIASVLSKKISAGSTHVVIDIPVGPTAKVRGEDAASHLASRITAVASRFGLAATCVQTDGSQPVGRGIGPALEAFDVLAVLQNASDAPDDLRRRAATLAGAALEIGRKAGKGEGTALALETLADGRAWKKFEAICEAQGGLRAPPRAAHVHPLVAPRAGRVVHINNRKLSRLAKLAGAPESKAGGVHMDVRLGDEIDRGQPLLHVHAETTGELAYALDYAARAGDIVEIEA</sequence>
<comment type="catalytic activity">
    <reaction evidence="1">
        <text>thymidine + phosphate = 2-deoxy-alpha-D-ribose 1-phosphate + thymine</text>
        <dbReference type="Rhea" id="RHEA:16037"/>
        <dbReference type="ChEBI" id="CHEBI:17748"/>
        <dbReference type="ChEBI" id="CHEBI:17821"/>
        <dbReference type="ChEBI" id="CHEBI:43474"/>
        <dbReference type="ChEBI" id="CHEBI:57259"/>
        <dbReference type="EC" id="2.4.2.4"/>
    </reaction>
</comment>
<comment type="similarity">
    <text evidence="1">Belongs to the thymidine/pyrimidine-nucleoside phosphorylase family. Type 2 subfamily.</text>
</comment>
<protein>
    <recommendedName>
        <fullName evidence="1">Putative thymidine phosphorylase</fullName>
        <ecNumber evidence="1">2.4.2.4</ecNumber>
    </recommendedName>
    <alternativeName>
        <fullName evidence="1">TdRPase</fullName>
    </alternativeName>
</protein>
<reference key="1">
    <citation type="submission" date="2006-06" db="EMBL/GenBank/DDBJ databases">
        <title>Complete sequence of chromosome of Mesorhizobium sp. BNC1.</title>
        <authorList>
            <consortium name="US DOE Joint Genome Institute"/>
            <person name="Copeland A."/>
            <person name="Lucas S."/>
            <person name="Lapidus A."/>
            <person name="Barry K."/>
            <person name="Detter J.C."/>
            <person name="Glavina del Rio T."/>
            <person name="Hammon N."/>
            <person name="Israni S."/>
            <person name="Dalin E."/>
            <person name="Tice H."/>
            <person name="Pitluck S."/>
            <person name="Chertkov O."/>
            <person name="Brettin T."/>
            <person name="Bruce D."/>
            <person name="Han C."/>
            <person name="Tapia R."/>
            <person name="Gilna P."/>
            <person name="Schmutz J."/>
            <person name="Larimer F."/>
            <person name="Land M."/>
            <person name="Hauser L."/>
            <person name="Kyrpides N."/>
            <person name="Mikhailova N."/>
            <person name="Richardson P."/>
        </authorList>
    </citation>
    <scope>NUCLEOTIDE SEQUENCE [LARGE SCALE GENOMIC DNA]</scope>
    <source>
        <strain>BNC1</strain>
    </source>
</reference>
<feature type="chain" id="PRO_0000314702" description="Putative thymidine phosphorylase">
    <location>
        <begin position="1"/>
        <end position="509"/>
    </location>
</feature>
<organism>
    <name type="scientific">Chelativorans sp. (strain BNC1)</name>
    <dbReference type="NCBI Taxonomy" id="266779"/>
    <lineage>
        <taxon>Bacteria</taxon>
        <taxon>Pseudomonadati</taxon>
        <taxon>Pseudomonadota</taxon>
        <taxon>Alphaproteobacteria</taxon>
        <taxon>Hyphomicrobiales</taxon>
        <taxon>Phyllobacteriaceae</taxon>
        <taxon>Chelativorans</taxon>
    </lineage>
</organism>
<evidence type="ECO:0000255" key="1">
    <source>
        <dbReference type="HAMAP-Rule" id="MF_00703"/>
    </source>
</evidence>
<proteinExistence type="inferred from homology"/>
<gene>
    <name type="ordered locus">Meso_3880</name>
</gene>
<dbReference type="EC" id="2.4.2.4" evidence="1"/>
<dbReference type="EMBL" id="CP000390">
    <property type="protein sequence ID" value="ABG65247.1"/>
    <property type="molecule type" value="Genomic_DNA"/>
</dbReference>
<dbReference type="SMR" id="Q11BH8"/>
<dbReference type="STRING" id="266779.Meso_3880"/>
<dbReference type="KEGG" id="mes:Meso_3880"/>
<dbReference type="eggNOG" id="COG0213">
    <property type="taxonomic scope" value="Bacteria"/>
</dbReference>
<dbReference type="HOGENOM" id="CLU_025040_6_0_5"/>
<dbReference type="OrthoDB" id="341217at2"/>
<dbReference type="GO" id="GO:0005829">
    <property type="term" value="C:cytosol"/>
    <property type="evidence" value="ECO:0007669"/>
    <property type="project" value="TreeGrafter"/>
</dbReference>
<dbReference type="GO" id="GO:0004645">
    <property type="term" value="F:1,4-alpha-oligoglucan phosphorylase activity"/>
    <property type="evidence" value="ECO:0007669"/>
    <property type="project" value="InterPro"/>
</dbReference>
<dbReference type="GO" id="GO:0009032">
    <property type="term" value="F:thymidine phosphorylase activity"/>
    <property type="evidence" value="ECO:0007669"/>
    <property type="project" value="UniProtKB-UniRule"/>
</dbReference>
<dbReference type="GO" id="GO:0006206">
    <property type="term" value="P:pyrimidine nucleobase metabolic process"/>
    <property type="evidence" value="ECO:0007669"/>
    <property type="project" value="InterPro"/>
</dbReference>
<dbReference type="GO" id="GO:0006213">
    <property type="term" value="P:pyrimidine nucleoside metabolic process"/>
    <property type="evidence" value="ECO:0007669"/>
    <property type="project" value="InterPro"/>
</dbReference>
<dbReference type="Gene3D" id="1.20.970.50">
    <property type="match status" value="1"/>
</dbReference>
<dbReference type="Gene3D" id="3.40.1030.10">
    <property type="entry name" value="Nucleoside phosphorylase/phosphoribosyltransferase catalytic domain"/>
    <property type="match status" value="1"/>
</dbReference>
<dbReference type="Gene3D" id="3.90.1170.30">
    <property type="entry name" value="Pyrimidine nucleoside phosphorylase-like, C-terminal domain"/>
    <property type="match status" value="1"/>
</dbReference>
<dbReference type="HAMAP" id="MF_00703">
    <property type="entry name" value="Thymid_phosp_2"/>
    <property type="match status" value="1"/>
</dbReference>
<dbReference type="InterPro" id="IPR000312">
    <property type="entry name" value="Glycosyl_Trfase_fam3"/>
</dbReference>
<dbReference type="InterPro" id="IPR017459">
    <property type="entry name" value="Glycosyl_Trfase_fam3_N_dom"/>
</dbReference>
<dbReference type="InterPro" id="IPR036320">
    <property type="entry name" value="Glycosyl_Trfase_fam3_N_dom_sf"/>
</dbReference>
<dbReference type="InterPro" id="IPR035902">
    <property type="entry name" value="Nuc_phospho_transferase"/>
</dbReference>
<dbReference type="InterPro" id="IPR036566">
    <property type="entry name" value="PYNP-like_C_sf"/>
</dbReference>
<dbReference type="InterPro" id="IPR013102">
    <property type="entry name" value="PYNP_C"/>
</dbReference>
<dbReference type="InterPro" id="IPR017872">
    <property type="entry name" value="Pyrmidine_PPase_CS"/>
</dbReference>
<dbReference type="InterPro" id="IPR028579">
    <property type="entry name" value="Thym_Pase_Put"/>
</dbReference>
<dbReference type="InterPro" id="IPR013466">
    <property type="entry name" value="Thymidine/AMP_Pase"/>
</dbReference>
<dbReference type="InterPro" id="IPR000053">
    <property type="entry name" value="Thymidine/pyrmidine_PPase"/>
</dbReference>
<dbReference type="NCBIfam" id="TIGR02645">
    <property type="entry name" value="ARCH_P_rylase"/>
    <property type="match status" value="1"/>
</dbReference>
<dbReference type="NCBIfam" id="NF003338">
    <property type="entry name" value="PRK04350.1"/>
    <property type="match status" value="1"/>
</dbReference>
<dbReference type="PANTHER" id="PTHR10515">
    <property type="entry name" value="THYMIDINE PHOSPHORYLASE"/>
    <property type="match status" value="1"/>
</dbReference>
<dbReference type="PANTHER" id="PTHR10515:SF0">
    <property type="entry name" value="THYMIDINE PHOSPHORYLASE"/>
    <property type="match status" value="1"/>
</dbReference>
<dbReference type="Pfam" id="PF02885">
    <property type="entry name" value="Glycos_trans_3N"/>
    <property type="match status" value="1"/>
</dbReference>
<dbReference type="Pfam" id="PF00591">
    <property type="entry name" value="Glycos_transf_3"/>
    <property type="match status" value="1"/>
</dbReference>
<dbReference type="SMART" id="SM00941">
    <property type="entry name" value="PYNP_C"/>
    <property type="match status" value="1"/>
</dbReference>
<dbReference type="SUPFAM" id="SSF52418">
    <property type="entry name" value="Nucleoside phosphorylase/phosphoribosyltransferase catalytic domain"/>
    <property type="match status" value="1"/>
</dbReference>
<dbReference type="SUPFAM" id="SSF47648">
    <property type="entry name" value="Nucleoside phosphorylase/phosphoribosyltransferase N-terminal domain"/>
    <property type="match status" value="1"/>
</dbReference>
<dbReference type="SUPFAM" id="SSF54680">
    <property type="entry name" value="Pyrimidine nucleoside phosphorylase C-terminal domain"/>
    <property type="match status" value="1"/>
</dbReference>
<dbReference type="PROSITE" id="PS00647">
    <property type="entry name" value="THYMID_PHOSPHORYLASE"/>
    <property type="match status" value="1"/>
</dbReference>